<evidence type="ECO:0000250" key="1">
    <source>
        <dbReference type="UniProtKB" id="Q96PS8"/>
    </source>
</evidence>
<evidence type="ECO:0000255" key="2"/>
<evidence type="ECO:0000256" key="3">
    <source>
        <dbReference type="SAM" id="MobiDB-lite"/>
    </source>
</evidence>
<evidence type="ECO:0000269" key="4">
    <source ref="2"/>
</evidence>
<evidence type="ECO:0000303" key="5">
    <source ref="2"/>
</evidence>
<evidence type="ECO:0000305" key="6"/>
<evidence type="ECO:0000312" key="7">
    <source>
        <dbReference type="HGNC" id="HGNC:19941"/>
    </source>
</evidence>
<protein>
    <recommendedName>
        <fullName evidence="6">Putative aquaporin-12A</fullName>
        <shortName evidence="6">AQP-12</shortName>
    </recommendedName>
</protein>
<dbReference type="EMBL" id="AB040748">
    <property type="protein sequence ID" value="BAC45006.1"/>
    <property type="molecule type" value="mRNA"/>
</dbReference>
<dbReference type="RefSeq" id="NP_945349.1">
    <property type="nucleotide sequence ID" value="NM_198998.3"/>
</dbReference>
<dbReference type="SMR" id="Q8IXF9"/>
<dbReference type="FunCoup" id="Q8IXF9">
    <property type="interactions" value="9"/>
</dbReference>
<dbReference type="STRING" id="9606.ENSP00000405899"/>
<dbReference type="TCDB" id="1.A.8.4.2">
    <property type="family name" value="the major intrinsic protein (mip) family"/>
</dbReference>
<dbReference type="PhosphoSitePlus" id="Q8IXF9"/>
<dbReference type="BioMuta" id="AQP12A"/>
<dbReference type="DMDM" id="47115836"/>
<dbReference type="MassIVE" id="Q8IXF9"/>
<dbReference type="PaxDb" id="9606-ENSP00000405899"/>
<dbReference type="PeptideAtlas" id="Q8IXF9"/>
<dbReference type="Antibodypedia" id="54747">
    <property type="antibodies" value="71 antibodies from 19 providers"/>
</dbReference>
<dbReference type="DNASU" id="375318"/>
<dbReference type="Ensembl" id="ENST00000337801.9">
    <property type="protein sequence ID" value="ENSP00000337144.4"/>
    <property type="gene ID" value="ENSG00000184945.15"/>
</dbReference>
<dbReference type="GeneID" id="375318"/>
<dbReference type="KEGG" id="hsa:375318"/>
<dbReference type="MANE-Select" id="ENST00000337801.9">
    <property type="protein sequence ID" value="ENSP00000337144.4"/>
    <property type="RefSeq nucleotide sequence ID" value="NM_198998.3"/>
    <property type="RefSeq protein sequence ID" value="NP_945349.1"/>
</dbReference>
<dbReference type="UCSC" id="uc002vzu.3">
    <property type="organism name" value="human"/>
</dbReference>
<dbReference type="AGR" id="HGNC:19941"/>
<dbReference type="CTD" id="375318"/>
<dbReference type="GeneCards" id="AQP12A"/>
<dbReference type="HGNC" id="HGNC:19941">
    <property type="gene designation" value="AQP12A"/>
</dbReference>
<dbReference type="HPA" id="ENSG00000184945">
    <property type="expression patterns" value="Tissue enriched (pancreas)"/>
</dbReference>
<dbReference type="MIM" id="609789">
    <property type="type" value="gene"/>
</dbReference>
<dbReference type="neXtProt" id="NX_Q8IXF9"/>
<dbReference type="OpenTargets" id="ENSG00000184945"/>
<dbReference type="PharmGKB" id="PA134977417"/>
<dbReference type="VEuPathDB" id="HostDB:ENSG00000184945"/>
<dbReference type="eggNOG" id="ENOG502RYFD">
    <property type="taxonomic scope" value="Eukaryota"/>
</dbReference>
<dbReference type="GeneTree" id="ENSGT00530000063816"/>
<dbReference type="HOGENOM" id="CLU_074449_3_0_1"/>
<dbReference type="InParanoid" id="Q8IXF9"/>
<dbReference type="OrthoDB" id="1580043at2759"/>
<dbReference type="PAN-GO" id="Q8IXF9">
    <property type="GO annotations" value="2 GO annotations based on evolutionary models"/>
</dbReference>
<dbReference type="PhylomeDB" id="Q8IXF9"/>
<dbReference type="TreeFam" id="TF320251"/>
<dbReference type="PathwayCommons" id="Q8IXF9"/>
<dbReference type="Reactome" id="R-HSA-432047">
    <property type="pathway name" value="Passive transport by Aquaporins"/>
</dbReference>
<dbReference type="SignaLink" id="Q8IXF9"/>
<dbReference type="BioGRID-ORCS" id="375318">
    <property type="hits" value="5 hits in 207 CRISPR screens"/>
</dbReference>
<dbReference type="GenomeRNAi" id="375318"/>
<dbReference type="Pharos" id="Q8IXF9">
    <property type="development level" value="Tbio"/>
</dbReference>
<dbReference type="PRO" id="PR:Q8IXF9"/>
<dbReference type="Proteomes" id="UP000005640">
    <property type="component" value="Chromosome 2"/>
</dbReference>
<dbReference type="RNAct" id="Q8IXF9">
    <property type="molecule type" value="protein"/>
</dbReference>
<dbReference type="Bgee" id="ENSG00000184945">
    <property type="expression patterns" value="Expressed in body of pancreas and 65 other cell types or tissues"/>
</dbReference>
<dbReference type="ExpressionAtlas" id="Q8IXF9">
    <property type="expression patterns" value="baseline and differential"/>
</dbReference>
<dbReference type="GO" id="GO:0005737">
    <property type="term" value="C:cytoplasm"/>
    <property type="evidence" value="ECO:0000318"/>
    <property type="project" value="GO_Central"/>
</dbReference>
<dbReference type="GO" id="GO:0016020">
    <property type="term" value="C:membrane"/>
    <property type="evidence" value="ECO:0007669"/>
    <property type="project" value="UniProtKB-SubCell"/>
</dbReference>
<dbReference type="GO" id="GO:0015267">
    <property type="term" value="F:channel activity"/>
    <property type="evidence" value="ECO:0000318"/>
    <property type="project" value="GO_Central"/>
</dbReference>
<dbReference type="GO" id="GO:0015250">
    <property type="term" value="F:water channel activity"/>
    <property type="evidence" value="ECO:0007669"/>
    <property type="project" value="UniProtKB-ARBA"/>
</dbReference>
<dbReference type="FunFam" id="1.20.1080.10:FF:000018">
    <property type="entry name" value="Aquaporin"/>
    <property type="match status" value="1"/>
</dbReference>
<dbReference type="Gene3D" id="1.20.1080.10">
    <property type="entry name" value="Glycerol uptake facilitator protein"/>
    <property type="match status" value="1"/>
</dbReference>
<dbReference type="InterPro" id="IPR051883">
    <property type="entry name" value="AQP11/12_channel"/>
</dbReference>
<dbReference type="InterPro" id="IPR023271">
    <property type="entry name" value="Aquaporin-like"/>
</dbReference>
<dbReference type="InterPro" id="IPR016697">
    <property type="entry name" value="Aquaporin_11/12"/>
</dbReference>
<dbReference type="InterPro" id="IPR023265">
    <property type="entry name" value="Aquaporin_12"/>
</dbReference>
<dbReference type="InterPro" id="IPR000425">
    <property type="entry name" value="MIP"/>
</dbReference>
<dbReference type="PANTHER" id="PTHR21191">
    <property type="entry name" value="AQUAPORIN"/>
    <property type="match status" value="1"/>
</dbReference>
<dbReference type="PANTHER" id="PTHR21191:SF8">
    <property type="entry name" value="AQUAPORIN-12A-RELATED"/>
    <property type="match status" value="1"/>
</dbReference>
<dbReference type="Pfam" id="PF00230">
    <property type="entry name" value="MIP"/>
    <property type="match status" value="1"/>
</dbReference>
<dbReference type="PIRSF" id="PIRSF017529">
    <property type="entry name" value="Aquaporin_11/12"/>
    <property type="match status" value="1"/>
</dbReference>
<dbReference type="PRINTS" id="PR02025">
    <property type="entry name" value="AQUAPORIN12"/>
</dbReference>
<dbReference type="PRINTS" id="PR00783">
    <property type="entry name" value="MINTRINSICP"/>
</dbReference>
<dbReference type="SUPFAM" id="SSF81338">
    <property type="entry name" value="Aquaporin-like"/>
    <property type="match status" value="1"/>
</dbReference>
<proteinExistence type="evidence at transcript level"/>
<feature type="chain" id="PRO_0000063971" description="Putative aquaporin-12A">
    <location>
        <begin position="1"/>
        <end position="295"/>
    </location>
</feature>
<feature type="transmembrane region" description="Helical; Name=1" evidence="2">
    <location>
        <begin position="1"/>
        <end position="21"/>
    </location>
</feature>
<feature type="topological domain" description="Extracellular" evidence="6">
    <location>
        <begin position="22"/>
        <end position="54"/>
    </location>
</feature>
<feature type="transmembrane region" description="Helical; Name=2" evidence="2">
    <location>
        <begin position="55"/>
        <end position="75"/>
    </location>
</feature>
<feature type="topological domain" description="Cytoplasmic" evidence="6">
    <location>
        <begin position="76"/>
        <end position="99"/>
    </location>
</feature>
<feature type="intramembrane region" description="Discontinuously helical" evidence="1">
    <location>
        <begin position="77"/>
        <end position="114"/>
    </location>
</feature>
<feature type="transmembrane region" description="Helical; Name=3" evidence="2">
    <location>
        <begin position="100"/>
        <end position="126"/>
    </location>
</feature>
<feature type="topological domain" description="Extracellular" evidence="6">
    <location>
        <begin position="127"/>
        <end position="145"/>
    </location>
</feature>
<feature type="transmembrane region" description="Helical; Name=4" evidence="2">
    <location>
        <begin position="146"/>
        <end position="166"/>
    </location>
</feature>
<feature type="topological domain" description="Cytoplasmic" evidence="6">
    <location>
        <begin position="167"/>
        <end position="178"/>
    </location>
</feature>
<feature type="transmembrane region" description="Helical; Name=5" evidence="2">
    <location>
        <begin position="179"/>
        <end position="199"/>
    </location>
</feature>
<feature type="intramembrane region" description="Discontinuously helical" evidence="1">
    <location>
        <begin position="195"/>
        <end position="206"/>
    </location>
</feature>
<feature type="topological domain" description="Extracellular" evidence="6">
    <location>
        <begin position="200"/>
        <end position="215"/>
    </location>
</feature>
<feature type="transmembrane region" description="Helical; Name=6" evidence="2">
    <location>
        <begin position="216"/>
        <end position="236"/>
    </location>
</feature>
<feature type="topological domain" description="Cytoplasmic" evidence="6">
    <location>
        <begin position="237"/>
        <end position="295"/>
    </location>
</feature>
<feature type="region of interest" description="Disordered" evidence="3">
    <location>
        <begin position="257"/>
        <end position="295"/>
    </location>
</feature>
<feature type="short sequence motif" description="NPA 1" evidence="1">
    <location>
        <begin position="81"/>
        <end position="83"/>
    </location>
</feature>
<feature type="short sequence motif" description="NPA 2" evidence="1">
    <location>
        <begin position="200"/>
        <end position="202"/>
    </location>
</feature>
<keyword id="KW-0472">Membrane</keyword>
<keyword id="KW-1185">Reference proteome</keyword>
<keyword id="KW-0677">Repeat</keyword>
<keyword id="KW-0812">Transmembrane</keyword>
<keyword id="KW-1133">Transmembrane helix</keyword>
<keyword id="KW-0813">Transport</keyword>
<comment type="function">
    <text evidence="1">Putative aquaporin. Could form homotetrameric transmembrane channels, with each monomer independently mediating water transport across the plasma membrane along its osmotic gradient.</text>
</comment>
<comment type="catalytic activity">
    <reaction evidence="1">
        <text>H2O(in) = H2O(out)</text>
        <dbReference type="Rhea" id="RHEA:29667"/>
        <dbReference type="ChEBI" id="CHEBI:15377"/>
    </reaction>
</comment>
<comment type="subunit">
    <text evidence="1">Homotetramer; each monomer provides an independent water pore.</text>
</comment>
<comment type="subcellular location">
    <subcellularLocation>
        <location evidence="2">Membrane</location>
        <topology evidence="2">Multi-pass membrane protein</topology>
    </subcellularLocation>
</comment>
<comment type="tissue specificity">
    <text evidence="4">Restricted to the pancreas.</text>
</comment>
<comment type="domain">
    <text evidence="1">Aquaporins contain two tandem repeats each containing three membrane-spanning domains and a pore-forming loop with the signature motif Asn-Pro-Ala (NPA).</text>
</comment>
<comment type="similarity">
    <text evidence="6">Belongs to the MIP/aquaporin (TC 1.A.8) family. AQP11/AQP12 subfamily.</text>
</comment>
<gene>
    <name evidence="7" type="primary">AQP12A</name>
    <name evidence="7" type="synonym">AQP12</name>
    <name evidence="5" type="synonym">AQPX2</name>
</gene>
<sequence length="295" mass="31475">MAGLNVSLSFFFATFALCEAARRASKALLPVGAYEVFAREAMRTLVELGPWAGDFGPDLLLTLLFLLFLAHGVTLDGASANPTVSLQEFLMAEQSLPGTLLKLAAQGLGMQAACTLMRLCWAWELSDLHLLQSLMAQSCSSALRTSVPHGALVEAACAFCFHLTLLHLRHSPPAYSGPAVALLVTVTAYTAGPFTSAFFNPALAASVTFACSGHTLLEYVQVYWLGPLTGMVLAVLLHQGRLPHLFQRNLFYGQKNKYRAPRGKPAPASGDTQTPAKGSSVREPGRSGVEGPHSS</sequence>
<organism>
    <name type="scientific">Homo sapiens</name>
    <name type="common">Human</name>
    <dbReference type="NCBI Taxonomy" id="9606"/>
    <lineage>
        <taxon>Eukaryota</taxon>
        <taxon>Metazoa</taxon>
        <taxon>Chordata</taxon>
        <taxon>Craniata</taxon>
        <taxon>Vertebrata</taxon>
        <taxon>Euteleostomi</taxon>
        <taxon>Mammalia</taxon>
        <taxon>Eutheria</taxon>
        <taxon>Euarchontoglires</taxon>
        <taxon>Primates</taxon>
        <taxon>Haplorrhini</taxon>
        <taxon>Catarrhini</taxon>
        <taxon>Hominidae</taxon>
        <taxon>Homo</taxon>
    </lineage>
</organism>
<accession>Q8IXF9</accession>
<reference key="1">
    <citation type="journal article" date="2005" name="Biochem. Biophys. Res. Commun.">
        <title>Identification of a novel aquaporin, AQP12, expressed in pancreatic acinar cells.</title>
        <authorList>
            <person name="Itoh T."/>
            <person name="Rai T."/>
            <person name="Kuwahara M."/>
            <person name="Ko S.B."/>
            <person name="Uchida S."/>
            <person name="Sasaki S."/>
            <person name="Ishibashi K."/>
        </authorList>
    </citation>
    <scope>NUCLEOTIDE SEQUENCE [MRNA]</scope>
    <source>
        <tissue>Pancreas</tissue>
    </source>
</reference>
<reference key="2">
    <citation type="book" date="2000" name="Molecular biology and physiology of water and solute transport">
        <title>Molecular cloning of a new aquaporin superfamily in mammals: AQPX1 and AQPX2.</title>
        <editorList>
            <person name="Hohmann S."/>
            <person name="Nielsen S."/>
        </editorList>
        <authorList>
            <person name="Ishibashi K."/>
            <person name="Kuwahara M."/>
            <person name="Kageyama Y."/>
            <person name="Sasaki S."/>
            <person name="Suzuki M."/>
            <person name="Imai M."/>
        </authorList>
    </citation>
    <scope>TISSUE SPECIFICITY</scope>
</reference>
<name>AQ12A_HUMAN</name>